<keyword id="KW-0963">Cytoplasm</keyword>
<keyword id="KW-0210">Decarboxylase</keyword>
<keyword id="KW-0456">Lyase</keyword>
<keyword id="KW-0627">Porphyrin biosynthesis</keyword>
<proteinExistence type="inferred from homology"/>
<protein>
    <recommendedName>
        <fullName evidence="1">Uroporphyrinogen decarboxylase</fullName>
        <shortName evidence="1">UPD</shortName>
        <shortName evidence="1">URO-D</shortName>
        <ecNumber evidence="1">4.1.1.37</ecNumber>
    </recommendedName>
</protein>
<accession>Q46VY4</accession>
<organism>
    <name type="scientific">Cupriavidus pinatubonensis (strain JMP 134 / LMG 1197)</name>
    <name type="common">Cupriavidus necator (strain JMP 134)</name>
    <dbReference type="NCBI Taxonomy" id="264198"/>
    <lineage>
        <taxon>Bacteria</taxon>
        <taxon>Pseudomonadati</taxon>
        <taxon>Pseudomonadota</taxon>
        <taxon>Betaproteobacteria</taxon>
        <taxon>Burkholderiales</taxon>
        <taxon>Burkholderiaceae</taxon>
        <taxon>Cupriavidus</taxon>
    </lineage>
</organism>
<dbReference type="EC" id="4.1.1.37" evidence="1"/>
<dbReference type="EMBL" id="CP000090">
    <property type="protein sequence ID" value="AAZ62700.1"/>
    <property type="molecule type" value="Genomic_DNA"/>
</dbReference>
<dbReference type="SMR" id="Q46VY4"/>
<dbReference type="STRING" id="264198.Reut_A3342"/>
<dbReference type="KEGG" id="reu:Reut_A3342"/>
<dbReference type="eggNOG" id="COG0407">
    <property type="taxonomic scope" value="Bacteria"/>
</dbReference>
<dbReference type="HOGENOM" id="CLU_040933_0_0_4"/>
<dbReference type="OrthoDB" id="9806656at2"/>
<dbReference type="UniPathway" id="UPA00251">
    <property type="reaction ID" value="UER00321"/>
</dbReference>
<dbReference type="GO" id="GO:0005829">
    <property type="term" value="C:cytosol"/>
    <property type="evidence" value="ECO:0007669"/>
    <property type="project" value="TreeGrafter"/>
</dbReference>
<dbReference type="GO" id="GO:0004853">
    <property type="term" value="F:uroporphyrinogen decarboxylase activity"/>
    <property type="evidence" value="ECO:0007669"/>
    <property type="project" value="UniProtKB-UniRule"/>
</dbReference>
<dbReference type="GO" id="GO:0019353">
    <property type="term" value="P:protoporphyrinogen IX biosynthetic process from glutamate"/>
    <property type="evidence" value="ECO:0007669"/>
    <property type="project" value="TreeGrafter"/>
</dbReference>
<dbReference type="CDD" id="cd00717">
    <property type="entry name" value="URO-D"/>
    <property type="match status" value="1"/>
</dbReference>
<dbReference type="FunFam" id="3.20.20.210:FF:000001">
    <property type="entry name" value="Uroporphyrinogen decarboxylase"/>
    <property type="match status" value="1"/>
</dbReference>
<dbReference type="Gene3D" id="3.20.20.210">
    <property type="match status" value="1"/>
</dbReference>
<dbReference type="HAMAP" id="MF_00218">
    <property type="entry name" value="URO_D"/>
    <property type="match status" value="1"/>
</dbReference>
<dbReference type="InterPro" id="IPR038071">
    <property type="entry name" value="UROD/MetE-like_sf"/>
</dbReference>
<dbReference type="InterPro" id="IPR006361">
    <property type="entry name" value="Uroporphyrinogen_deCO2ase_HemE"/>
</dbReference>
<dbReference type="InterPro" id="IPR000257">
    <property type="entry name" value="Uroporphyrinogen_deCOase"/>
</dbReference>
<dbReference type="NCBIfam" id="TIGR01464">
    <property type="entry name" value="hemE"/>
    <property type="match status" value="1"/>
</dbReference>
<dbReference type="PANTHER" id="PTHR21091">
    <property type="entry name" value="METHYLTETRAHYDROFOLATE:HOMOCYSTEINE METHYLTRANSFERASE RELATED"/>
    <property type="match status" value="1"/>
</dbReference>
<dbReference type="PANTHER" id="PTHR21091:SF169">
    <property type="entry name" value="UROPORPHYRINOGEN DECARBOXYLASE"/>
    <property type="match status" value="1"/>
</dbReference>
<dbReference type="Pfam" id="PF01208">
    <property type="entry name" value="URO-D"/>
    <property type="match status" value="1"/>
</dbReference>
<dbReference type="SUPFAM" id="SSF51726">
    <property type="entry name" value="UROD/MetE-like"/>
    <property type="match status" value="1"/>
</dbReference>
<dbReference type="PROSITE" id="PS00906">
    <property type="entry name" value="UROD_1"/>
    <property type="match status" value="1"/>
</dbReference>
<dbReference type="PROSITE" id="PS00907">
    <property type="entry name" value="UROD_2"/>
    <property type="match status" value="1"/>
</dbReference>
<evidence type="ECO:0000255" key="1">
    <source>
        <dbReference type="HAMAP-Rule" id="MF_00218"/>
    </source>
</evidence>
<name>DCUP_CUPPJ</name>
<feature type="chain" id="PRO_1000023955" description="Uroporphyrinogen decarboxylase">
    <location>
        <begin position="1"/>
        <end position="363"/>
    </location>
</feature>
<feature type="binding site" evidence="1">
    <location>
        <begin position="27"/>
        <end position="31"/>
    </location>
    <ligand>
        <name>substrate</name>
    </ligand>
</feature>
<feature type="binding site" evidence="1">
    <location>
        <position position="77"/>
    </location>
    <ligand>
        <name>substrate</name>
    </ligand>
</feature>
<feature type="binding site" evidence="1">
    <location>
        <position position="157"/>
    </location>
    <ligand>
        <name>substrate</name>
    </ligand>
</feature>
<feature type="binding site" evidence="1">
    <location>
        <position position="212"/>
    </location>
    <ligand>
        <name>substrate</name>
    </ligand>
</feature>
<feature type="binding site" evidence="1">
    <location>
        <position position="333"/>
    </location>
    <ligand>
        <name>substrate</name>
    </ligand>
</feature>
<feature type="site" description="Transition state stabilizer" evidence="1">
    <location>
        <position position="77"/>
    </location>
</feature>
<gene>
    <name evidence="1" type="primary">hemE</name>
    <name type="ordered locus">Reut_A3342</name>
</gene>
<comment type="function">
    <text evidence="1">Catalyzes the decarboxylation of four acetate groups of uroporphyrinogen-III to yield coproporphyrinogen-III.</text>
</comment>
<comment type="catalytic activity">
    <reaction evidence="1">
        <text>uroporphyrinogen III + 4 H(+) = coproporphyrinogen III + 4 CO2</text>
        <dbReference type="Rhea" id="RHEA:19865"/>
        <dbReference type="ChEBI" id="CHEBI:15378"/>
        <dbReference type="ChEBI" id="CHEBI:16526"/>
        <dbReference type="ChEBI" id="CHEBI:57308"/>
        <dbReference type="ChEBI" id="CHEBI:57309"/>
        <dbReference type="EC" id="4.1.1.37"/>
    </reaction>
</comment>
<comment type="pathway">
    <text evidence="1">Porphyrin-containing compound metabolism; protoporphyrin-IX biosynthesis; coproporphyrinogen-III from 5-aminolevulinate: step 4/4.</text>
</comment>
<comment type="subunit">
    <text evidence="1">Homodimer.</text>
</comment>
<comment type="subcellular location">
    <subcellularLocation>
        <location evidence="1">Cytoplasm</location>
    </subcellularLocation>
</comment>
<comment type="similarity">
    <text evidence="1">Belongs to the uroporphyrinogen decarboxylase family.</text>
</comment>
<reference key="1">
    <citation type="journal article" date="2010" name="PLoS ONE">
        <title>The complete multipartite genome sequence of Cupriavidus necator JMP134, a versatile pollutant degrader.</title>
        <authorList>
            <person name="Lykidis A."/>
            <person name="Perez-Pantoja D."/>
            <person name="Ledger T."/>
            <person name="Mavromatis K."/>
            <person name="Anderson I.J."/>
            <person name="Ivanova N.N."/>
            <person name="Hooper S.D."/>
            <person name="Lapidus A."/>
            <person name="Lucas S."/>
            <person name="Gonzalez B."/>
            <person name="Kyrpides N.C."/>
        </authorList>
    </citation>
    <scope>NUCLEOTIDE SEQUENCE [LARGE SCALE GENOMIC DNA]</scope>
    <source>
        <strain>JMP134 / LMG 1197</strain>
    </source>
</reference>
<sequence length="363" mass="39595">MTALQNDTFLRALRRQPTEYTPLWLMRQAGRYLPEYNATRARAGSFLGLAKNPAYATEVTLQPLDRYPLDAAILFSDILTVPDAMGLGLSFAQGEGPRFARPLRTEADVQKLAVPDMASLQYVFDAVAEIRRALVQDGRQRVPLIGFSGSPWTLACYMVEGGGSDDFRTVKAMMYGRPDLMHRILDINAQAVSEYLNAQIEAGAQAVMIFDTWGGALADGMYQAFSLAYMRKVLAGLKREHDGQQIPAIVFTKGGGLWLEGLADTGADAIGLDWTVNLAQARRRTGGRVALQGNIDPTVLFAPEAAIREQVRGVLDSYAAAGGSDGHVFNLGHGISQFTPPESVAVLVDEVHRYSRQLRTSQG</sequence>